<keyword id="KW-0963">Cytoplasm</keyword>
<keyword id="KW-0274">FAD</keyword>
<keyword id="KW-0285">Flavoprotein</keyword>
<keyword id="KW-0489">Methyltransferase</keyword>
<keyword id="KW-0511">Multifunctional enzyme</keyword>
<keyword id="KW-0560">Oxidoreductase</keyword>
<keyword id="KW-0949">S-adenosyl-L-methionine</keyword>
<keyword id="KW-0808">Transferase</keyword>
<keyword id="KW-0819">tRNA processing</keyword>
<name>MNMC_VIBC3</name>
<organism>
    <name type="scientific">Vibrio cholerae serotype O1 (strain ATCC 39541 / Classical Ogawa 395 / O395)</name>
    <dbReference type="NCBI Taxonomy" id="345073"/>
    <lineage>
        <taxon>Bacteria</taxon>
        <taxon>Pseudomonadati</taxon>
        <taxon>Pseudomonadota</taxon>
        <taxon>Gammaproteobacteria</taxon>
        <taxon>Vibrionales</taxon>
        <taxon>Vibrionaceae</taxon>
        <taxon>Vibrio</taxon>
    </lineage>
</organism>
<reference key="1">
    <citation type="submission" date="2007-03" db="EMBL/GenBank/DDBJ databases">
        <authorList>
            <person name="Heidelberg J."/>
        </authorList>
    </citation>
    <scope>NUCLEOTIDE SEQUENCE [LARGE SCALE GENOMIC DNA]</scope>
    <source>
        <strain>ATCC 39541 / Classical Ogawa 395 / O395</strain>
    </source>
</reference>
<reference key="2">
    <citation type="journal article" date="2008" name="PLoS ONE">
        <title>A recalibrated molecular clock and independent origins for the cholera pandemic clones.</title>
        <authorList>
            <person name="Feng L."/>
            <person name="Reeves P.R."/>
            <person name="Lan R."/>
            <person name="Ren Y."/>
            <person name="Gao C."/>
            <person name="Zhou Z."/>
            <person name="Ren Y."/>
            <person name="Cheng J."/>
            <person name="Wang W."/>
            <person name="Wang J."/>
            <person name="Qian W."/>
            <person name="Li D."/>
            <person name="Wang L."/>
        </authorList>
    </citation>
    <scope>NUCLEOTIDE SEQUENCE [LARGE SCALE GENOMIC DNA]</scope>
    <source>
        <strain>ATCC 39541 / Classical Ogawa 395 / O395</strain>
    </source>
</reference>
<dbReference type="EC" id="2.1.1.61" evidence="1"/>
<dbReference type="EC" id="1.5.-.-" evidence="1"/>
<dbReference type="EMBL" id="CP000627">
    <property type="protein sequence ID" value="ABQ21228.1"/>
    <property type="molecule type" value="Genomic_DNA"/>
</dbReference>
<dbReference type="EMBL" id="CP001235">
    <property type="protein sequence ID" value="ACP10216.1"/>
    <property type="molecule type" value="Genomic_DNA"/>
</dbReference>
<dbReference type="SMR" id="A5F6E9"/>
<dbReference type="KEGG" id="vco:VC0395_A1694"/>
<dbReference type="KEGG" id="vcr:VC395_2224"/>
<dbReference type="PATRIC" id="fig|345073.21.peg.2149"/>
<dbReference type="eggNOG" id="COG0665">
    <property type="taxonomic scope" value="Bacteria"/>
</dbReference>
<dbReference type="eggNOG" id="COG4121">
    <property type="taxonomic scope" value="Bacteria"/>
</dbReference>
<dbReference type="HOGENOM" id="CLU_022427_2_1_6"/>
<dbReference type="OrthoDB" id="9786494at2"/>
<dbReference type="Proteomes" id="UP000000249">
    <property type="component" value="Chromosome 2"/>
</dbReference>
<dbReference type="GO" id="GO:0005737">
    <property type="term" value="C:cytoplasm"/>
    <property type="evidence" value="ECO:0007669"/>
    <property type="project" value="UniProtKB-SubCell"/>
</dbReference>
<dbReference type="GO" id="GO:0050660">
    <property type="term" value="F:flavin adenine dinucleotide binding"/>
    <property type="evidence" value="ECO:0007669"/>
    <property type="project" value="UniProtKB-UniRule"/>
</dbReference>
<dbReference type="GO" id="GO:0016645">
    <property type="term" value="F:oxidoreductase activity, acting on the CH-NH group of donors"/>
    <property type="evidence" value="ECO:0007669"/>
    <property type="project" value="InterPro"/>
</dbReference>
<dbReference type="GO" id="GO:0004808">
    <property type="term" value="F:tRNA (5-methylaminomethyl-2-thiouridylate)(34)-methyltransferase activity"/>
    <property type="evidence" value="ECO:0007669"/>
    <property type="project" value="UniProtKB-EC"/>
</dbReference>
<dbReference type="GO" id="GO:0032259">
    <property type="term" value="P:methylation"/>
    <property type="evidence" value="ECO:0007669"/>
    <property type="project" value="UniProtKB-KW"/>
</dbReference>
<dbReference type="GO" id="GO:0002098">
    <property type="term" value="P:tRNA wobble uridine modification"/>
    <property type="evidence" value="ECO:0007669"/>
    <property type="project" value="TreeGrafter"/>
</dbReference>
<dbReference type="FunFam" id="3.40.50.150:FF:000107">
    <property type="entry name" value="tRNA 5-methylaminomethyl-2-thiouridine biosynthesis bifunctional protein MnmC"/>
    <property type="match status" value="1"/>
</dbReference>
<dbReference type="Gene3D" id="3.30.9.10">
    <property type="entry name" value="D-Amino Acid Oxidase, subunit A, domain 2"/>
    <property type="match status" value="1"/>
</dbReference>
<dbReference type="Gene3D" id="3.50.50.60">
    <property type="entry name" value="FAD/NAD(P)-binding domain"/>
    <property type="match status" value="1"/>
</dbReference>
<dbReference type="Gene3D" id="3.40.50.150">
    <property type="entry name" value="Vaccinia Virus protein VP39"/>
    <property type="match status" value="1"/>
</dbReference>
<dbReference type="HAMAP" id="MF_01102">
    <property type="entry name" value="MnmC"/>
    <property type="match status" value="1"/>
</dbReference>
<dbReference type="InterPro" id="IPR006076">
    <property type="entry name" value="FAD-dep_OxRdtase"/>
</dbReference>
<dbReference type="InterPro" id="IPR036188">
    <property type="entry name" value="FAD/NAD-bd_sf"/>
</dbReference>
<dbReference type="InterPro" id="IPR008471">
    <property type="entry name" value="MnmC-like_methylTransf"/>
</dbReference>
<dbReference type="InterPro" id="IPR029063">
    <property type="entry name" value="SAM-dependent_MTases_sf"/>
</dbReference>
<dbReference type="InterPro" id="IPR023032">
    <property type="entry name" value="tRNA_MAMT_biosynth_bifunc_MnmC"/>
</dbReference>
<dbReference type="InterPro" id="IPR047785">
    <property type="entry name" value="tRNA_MNMC2"/>
</dbReference>
<dbReference type="InterPro" id="IPR017610">
    <property type="entry name" value="tRNA_S-uridine_synth_MnmC_C"/>
</dbReference>
<dbReference type="NCBIfam" id="TIGR03197">
    <property type="entry name" value="MnmC_Cterm"/>
    <property type="match status" value="1"/>
</dbReference>
<dbReference type="NCBIfam" id="NF002481">
    <property type="entry name" value="PRK01747.1-2"/>
    <property type="match status" value="1"/>
</dbReference>
<dbReference type="NCBIfam" id="NF002484">
    <property type="entry name" value="PRK01747.1-5"/>
    <property type="match status" value="1"/>
</dbReference>
<dbReference type="NCBIfam" id="NF033855">
    <property type="entry name" value="tRNA_MNMC2"/>
    <property type="match status" value="1"/>
</dbReference>
<dbReference type="PANTHER" id="PTHR13847">
    <property type="entry name" value="SARCOSINE DEHYDROGENASE-RELATED"/>
    <property type="match status" value="1"/>
</dbReference>
<dbReference type="PANTHER" id="PTHR13847:SF283">
    <property type="entry name" value="TRNA 5-METHYLAMINOMETHYL-2-THIOURIDINE BIOSYNTHESIS BIFUNCTIONAL PROTEIN MNMC"/>
    <property type="match status" value="1"/>
</dbReference>
<dbReference type="Pfam" id="PF01266">
    <property type="entry name" value="DAO"/>
    <property type="match status" value="1"/>
</dbReference>
<dbReference type="Pfam" id="PF05430">
    <property type="entry name" value="Methyltransf_30"/>
    <property type="match status" value="1"/>
</dbReference>
<dbReference type="SUPFAM" id="SSF51905">
    <property type="entry name" value="FAD/NAD(P)-binding domain"/>
    <property type="match status" value="1"/>
</dbReference>
<sequence>MFIMSSISHAQLGWNDAGTPVSDQFDDVYFSNVNGLAETRYVFLEQNHLPQRWHNDDQRRFVIAETGFGTGLNFLAVWQAFVAFREANPDAKLKELHFISFEKYPLSKSDLIQAHQAWPELAQFAQKLHKHYPLAIPECQRIVLDDGLITLDLWFGDIKDCLPKVATQEQGLVDAWFLDGFAPSKNPEMWNQGLFAGMAKLAKHGCTCATFTSAGFVRRGLIDAGFAMKKVKGFGTKREMIAGSLSEKVPYTNIAPEFRFEATHGLQEVAIIGGGIASATLATTLARRGVAVTLYCADEKPAQGASGNRQGAVYPLLSGDHNAVSRVFAPAFLFARQWIEQAAEQINFDHDWCGVTQLMWDEKATDKLKSMLEGDFPTQLVRGLSAEQTNQQVGVPVDKASVHYPLGGWLCPAELTQGLIHLLAQQGKLTAHYQTPIDELTWQPETQLWQLRSGDTLMSHQCVVIASGHQFDSLSQTAELPLGKVKGQVSHIPTTETLSKINSVLCYDGYMTPVSQQNGYHCIGASYDRQHLDATFDPQAQRENAQKLIHCLPEQTWPLEVDVGGNQSRQGVRCVSRDHLPFVGNVGEFSKITEQYRDLAQQQEAEPIALYPQLYALVGLGSRGLSSAPLMAELLASQMCGDPMPLGVDLLEQLHPSRMWVRKLRKGKALTQKV</sequence>
<feature type="chain" id="PRO_1000073028" description="tRNA 5-methylaminomethyl-2-thiouridine biosynthesis bifunctional protein MnmC">
    <location>
        <begin position="1"/>
        <end position="674"/>
    </location>
</feature>
<feature type="region of interest" description="tRNA (mnm(5)s(2)U34)-methyltransferase">
    <location>
        <begin position="1"/>
        <end position="246"/>
    </location>
</feature>
<feature type="region of interest" description="FAD-dependent cmnm(5)s(2)U34 oxidoreductase">
    <location>
        <begin position="272"/>
        <end position="674"/>
    </location>
</feature>
<gene>
    <name evidence="1" type="primary">mnmC</name>
    <name type="ordered locus">VC0395_A1694</name>
    <name type="ordered locus">VC395_2224</name>
</gene>
<accession>A5F6E9</accession>
<accession>C3M2U2</accession>
<evidence type="ECO:0000255" key="1">
    <source>
        <dbReference type="HAMAP-Rule" id="MF_01102"/>
    </source>
</evidence>
<comment type="function">
    <text evidence="1">Catalyzes the last two steps in the biosynthesis of 5-methylaminomethyl-2-thiouridine (mnm(5)s(2)U) at the wobble position (U34) in tRNA. Catalyzes the FAD-dependent demodification of cmnm(5)s(2)U34 to nm(5)s(2)U34, followed by the transfer of a methyl group from S-adenosyl-L-methionine to nm(5)s(2)U34, to form mnm(5)s(2)U34.</text>
</comment>
<comment type="catalytic activity">
    <reaction evidence="1">
        <text>5-aminomethyl-2-thiouridine(34) in tRNA + S-adenosyl-L-methionine = 5-methylaminomethyl-2-thiouridine(34) in tRNA + S-adenosyl-L-homocysteine + H(+)</text>
        <dbReference type="Rhea" id="RHEA:19569"/>
        <dbReference type="Rhea" id="RHEA-COMP:10195"/>
        <dbReference type="Rhea" id="RHEA-COMP:10197"/>
        <dbReference type="ChEBI" id="CHEBI:15378"/>
        <dbReference type="ChEBI" id="CHEBI:57856"/>
        <dbReference type="ChEBI" id="CHEBI:59789"/>
        <dbReference type="ChEBI" id="CHEBI:74454"/>
        <dbReference type="ChEBI" id="CHEBI:74455"/>
        <dbReference type="EC" id="2.1.1.61"/>
    </reaction>
</comment>
<comment type="cofactor">
    <cofactor evidence="1">
        <name>FAD</name>
        <dbReference type="ChEBI" id="CHEBI:57692"/>
    </cofactor>
</comment>
<comment type="subcellular location">
    <subcellularLocation>
        <location evidence="1">Cytoplasm</location>
    </subcellularLocation>
</comment>
<comment type="similarity">
    <text evidence="1">In the N-terminal section; belongs to the methyltransferase superfamily. tRNA (mnm(5)s(2)U34)-methyltransferase family.</text>
</comment>
<comment type="similarity">
    <text evidence="1">In the C-terminal section; belongs to the DAO family.</text>
</comment>
<proteinExistence type="inferred from homology"/>
<protein>
    <recommendedName>
        <fullName evidence="1">tRNA 5-methylaminomethyl-2-thiouridine biosynthesis bifunctional protein MnmC</fullName>
        <shortName evidence="1">tRNA mnm(5)s(2)U biosynthesis bifunctional protein</shortName>
    </recommendedName>
    <domain>
        <recommendedName>
            <fullName evidence="1">tRNA (mnm(5)s(2)U34)-methyltransferase</fullName>
            <ecNumber evidence="1">2.1.1.61</ecNumber>
        </recommendedName>
    </domain>
    <domain>
        <recommendedName>
            <fullName evidence="1">FAD-dependent cmnm(5)s(2)U34 oxidoreductase</fullName>
            <ecNumber evidence="1">1.5.-.-</ecNumber>
        </recommendedName>
    </domain>
</protein>